<keyword id="KW-0249">Electron transport</keyword>
<keyword id="KW-0349">Heme</keyword>
<keyword id="KW-0408">Iron</keyword>
<keyword id="KW-0472">Membrane</keyword>
<keyword id="KW-0479">Metal-binding</keyword>
<keyword id="KW-0496">Mitochondrion</keyword>
<keyword id="KW-0999">Mitochondrion inner membrane</keyword>
<keyword id="KW-0679">Respiratory chain</keyword>
<keyword id="KW-0812">Transmembrane</keyword>
<keyword id="KW-1133">Transmembrane helix</keyword>
<keyword id="KW-0813">Transport</keyword>
<keyword id="KW-0830">Ubiquinone</keyword>
<accession>Q34889</accession>
<proteinExistence type="inferred from homology"/>
<organism>
    <name type="scientific">Callipepla gambelii</name>
    <name type="common">Gambel's quail</name>
    <name type="synonym">Lophortyx gambelii</name>
    <dbReference type="NCBI Taxonomy" id="67773"/>
    <lineage>
        <taxon>Eukaryota</taxon>
        <taxon>Metazoa</taxon>
        <taxon>Chordata</taxon>
        <taxon>Craniata</taxon>
        <taxon>Vertebrata</taxon>
        <taxon>Euteleostomi</taxon>
        <taxon>Archelosauria</taxon>
        <taxon>Archosauria</taxon>
        <taxon>Dinosauria</taxon>
        <taxon>Saurischia</taxon>
        <taxon>Theropoda</taxon>
        <taxon>Coelurosauria</taxon>
        <taxon>Aves</taxon>
        <taxon>Neognathae</taxon>
        <taxon>Galloanserae</taxon>
        <taxon>Galliformes</taxon>
        <taxon>Odontophoridae</taxon>
        <taxon>Callipepla</taxon>
    </lineage>
</organism>
<sequence length="380" mass="42449">MAPNIRKSHPLLKIINTSLIDLPAPSNISAWWNFGSLLAMCLMTQIITGLLLATHYTADTTLAFSSVAHTCRNVQYGWLIRNLHANGASFFFICIYLHIGRGLYYGSYLYKETWNTGVILLLTLMATAFVGYVLHEGQMSFWGATVITNLFSAIPYIGQTLVEWAWGGFSVDNPTLTRFFALHFLLPFIIAGITIIHLAFLHESGSNNPLGISSDSDKIPFHPYYSLKDILGLALMITPLLTLALFSPNLLGDPENFTPANPLTTPPHIKPEWYFLFAYAILRSIPNKLGGVLALAASVLILLLIPFLHKSKQRTMTFRPLSQILFWLLAANLLILTWIGSQPVEHPFIIIGQLASFSYFTTILILFPIIGTLENKMLNY</sequence>
<evidence type="ECO:0000250" key="1"/>
<evidence type="ECO:0000250" key="2">
    <source>
        <dbReference type="UniProtKB" id="P00157"/>
    </source>
</evidence>
<evidence type="ECO:0000255" key="3">
    <source>
        <dbReference type="PROSITE-ProRule" id="PRU00967"/>
    </source>
</evidence>
<evidence type="ECO:0000255" key="4">
    <source>
        <dbReference type="PROSITE-ProRule" id="PRU00968"/>
    </source>
</evidence>
<feature type="chain" id="PRO_0000061134" description="Cytochrome b">
    <location>
        <begin position="1"/>
        <end position="380"/>
    </location>
</feature>
<feature type="transmembrane region" description="Helical" evidence="2">
    <location>
        <begin position="34"/>
        <end position="54"/>
    </location>
</feature>
<feature type="transmembrane region" description="Helical" evidence="2">
    <location>
        <begin position="78"/>
        <end position="99"/>
    </location>
</feature>
<feature type="transmembrane region" description="Helical" evidence="2">
    <location>
        <begin position="114"/>
        <end position="134"/>
    </location>
</feature>
<feature type="transmembrane region" description="Helical" evidence="2">
    <location>
        <begin position="179"/>
        <end position="199"/>
    </location>
</feature>
<feature type="transmembrane region" description="Helical" evidence="2">
    <location>
        <begin position="227"/>
        <end position="247"/>
    </location>
</feature>
<feature type="transmembrane region" description="Helical" evidence="2">
    <location>
        <begin position="289"/>
        <end position="309"/>
    </location>
</feature>
<feature type="transmembrane region" description="Helical" evidence="2">
    <location>
        <begin position="321"/>
        <end position="341"/>
    </location>
</feature>
<feature type="transmembrane region" description="Helical" evidence="2">
    <location>
        <begin position="348"/>
        <end position="368"/>
    </location>
</feature>
<feature type="binding site" description="axial binding residue" evidence="2">
    <location>
        <position position="84"/>
    </location>
    <ligand>
        <name>heme b</name>
        <dbReference type="ChEBI" id="CHEBI:60344"/>
        <label>b562</label>
    </ligand>
    <ligandPart>
        <name>Fe</name>
        <dbReference type="ChEBI" id="CHEBI:18248"/>
    </ligandPart>
</feature>
<feature type="binding site" description="axial binding residue" evidence="2">
    <location>
        <position position="98"/>
    </location>
    <ligand>
        <name>heme b</name>
        <dbReference type="ChEBI" id="CHEBI:60344"/>
        <label>b566</label>
    </ligand>
    <ligandPart>
        <name>Fe</name>
        <dbReference type="ChEBI" id="CHEBI:18248"/>
    </ligandPart>
</feature>
<feature type="binding site" description="axial binding residue" evidence="2">
    <location>
        <position position="183"/>
    </location>
    <ligand>
        <name>heme b</name>
        <dbReference type="ChEBI" id="CHEBI:60344"/>
        <label>b562</label>
    </ligand>
    <ligandPart>
        <name>Fe</name>
        <dbReference type="ChEBI" id="CHEBI:18248"/>
    </ligandPart>
</feature>
<feature type="binding site" description="axial binding residue" evidence="2">
    <location>
        <position position="197"/>
    </location>
    <ligand>
        <name>heme b</name>
        <dbReference type="ChEBI" id="CHEBI:60344"/>
        <label>b566</label>
    </ligand>
    <ligandPart>
        <name>Fe</name>
        <dbReference type="ChEBI" id="CHEBI:18248"/>
    </ligandPart>
</feature>
<feature type="binding site" evidence="2">
    <location>
        <position position="202"/>
    </location>
    <ligand>
        <name>a ubiquinone</name>
        <dbReference type="ChEBI" id="CHEBI:16389"/>
    </ligand>
</feature>
<gene>
    <name type="primary">MT-CYB</name>
    <name type="synonym">COB</name>
    <name type="synonym">CYTB</name>
    <name type="synonym">MTCYB</name>
</gene>
<comment type="function">
    <text evidence="2">Component of the ubiquinol-cytochrome c reductase complex (complex III or cytochrome b-c1 complex) that is part of the mitochondrial respiratory chain. The b-c1 complex mediates electron transfer from ubiquinol to cytochrome c. Contributes to the generation of a proton gradient across the mitochondrial membrane that is then used for ATP synthesis.</text>
</comment>
<comment type="cofactor">
    <cofactor evidence="2">
        <name>heme b</name>
        <dbReference type="ChEBI" id="CHEBI:60344"/>
    </cofactor>
    <text evidence="2">Binds 2 heme b groups non-covalently.</text>
</comment>
<comment type="subunit">
    <text evidence="2">The cytochrome bc1 complex contains 11 subunits: 3 respiratory subunits (MT-CYB, CYC1 and UQCRFS1), 2 core proteins (UQCRC1 and UQCRC2) and 6 low-molecular weight proteins (UQCRH/QCR6, UQCRB/QCR7, UQCRQ/QCR8, UQCR10/QCR9, UQCR11/QCR10 and a cleavage product of UQCRFS1). This cytochrome bc1 complex then forms a dimer.</text>
</comment>
<comment type="subcellular location">
    <subcellularLocation>
        <location evidence="2">Mitochondrion inner membrane</location>
        <topology evidence="2">Multi-pass membrane protein</topology>
    </subcellularLocation>
</comment>
<comment type="miscellaneous">
    <text evidence="1">Heme 1 (or BL or b562) is low-potential and absorbs at about 562 nm, and heme 2 (or BH or b566) is high-potential and absorbs at about 566 nm.</text>
</comment>
<comment type="similarity">
    <text evidence="3 4">Belongs to the cytochrome b family.</text>
</comment>
<comment type="caution">
    <text evidence="2">The full-length protein contains only eight transmembrane helices, not nine as predicted by bioinformatics tools.</text>
</comment>
<protein>
    <recommendedName>
        <fullName>Cytochrome b</fullName>
    </recommendedName>
    <alternativeName>
        <fullName>Complex III subunit 3</fullName>
    </alternativeName>
    <alternativeName>
        <fullName>Complex III subunit III</fullName>
    </alternativeName>
    <alternativeName>
        <fullName>Cytochrome b-c1 complex subunit 3</fullName>
    </alternativeName>
    <alternativeName>
        <fullName>Ubiquinol-cytochrome-c reductase complex cytochrome b subunit</fullName>
    </alternativeName>
</protein>
<geneLocation type="mitochondrion"/>
<name>CYB_CALGM</name>
<reference key="1">
    <citation type="journal article" date="1993" name="J. Mol. Evol.">
        <title>Pathways of lysozyme evolution inferred from the sequences of cytochrome b in birds.</title>
        <authorList>
            <person name="Kornegay J.R."/>
            <person name="Kocher T.D."/>
            <person name="Williams L.A."/>
            <person name="Wilson A.C."/>
        </authorList>
    </citation>
    <scope>NUCLEOTIDE SEQUENCE [GENOMIC DNA]</scope>
    <source>
        <tissue>Liver</tissue>
    </source>
</reference>
<reference key="2">
    <citation type="submission" date="1997-10" db="EMBL/GenBank/DDBJ databases">
        <title>Molecular systematics of the scaled quail complex (Genus Callipepla).</title>
        <authorList>
            <person name="Zink R.M."/>
        </authorList>
    </citation>
    <scope>NUCLEOTIDE SEQUENCE [GENOMIC DNA] OF 270-370</scope>
</reference>
<dbReference type="EMBL" id="L08382">
    <property type="protein sequence ID" value="AAA18846.1"/>
    <property type="molecule type" value="Genomic_DNA"/>
</dbReference>
<dbReference type="EMBL" id="AF028763">
    <property type="protein sequence ID" value="AAD15643.1"/>
    <property type="molecule type" value="Genomic_DNA"/>
</dbReference>
<dbReference type="EMBL" id="AF028760">
    <property type="protein sequence ID" value="AAD15640.1"/>
    <property type="molecule type" value="Genomic_DNA"/>
</dbReference>
<dbReference type="SMR" id="Q34889"/>
<dbReference type="GO" id="GO:0005743">
    <property type="term" value="C:mitochondrial inner membrane"/>
    <property type="evidence" value="ECO:0007669"/>
    <property type="project" value="UniProtKB-SubCell"/>
</dbReference>
<dbReference type="GO" id="GO:0045275">
    <property type="term" value="C:respiratory chain complex III"/>
    <property type="evidence" value="ECO:0007669"/>
    <property type="project" value="InterPro"/>
</dbReference>
<dbReference type="GO" id="GO:0046872">
    <property type="term" value="F:metal ion binding"/>
    <property type="evidence" value="ECO:0007669"/>
    <property type="project" value="UniProtKB-KW"/>
</dbReference>
<dbReference type="GO" id="GO:0008121">
    <property type="term" value="F:ubiquinol-cytochrome-c reductase activity"/>
    <property type="evidence" value="ECO:0007669"/>
    <property type="project" value="InterPro"/>
</dbReference>
<dbReference type="GO" id="GO:0006122">
    <property type="term" value="P:mitochondrial electron transport, ubiquinol to cytochrome c"/>
    <property type="evidence" value="ECO:0007669"/>
    <property type="project" value="TreeGrafter"/>
</dbReference>
<dbReference type="CDD" id="cd00290">
    <property type="entry name" value="cytochrome_b_C"/>
    <property type="match status" value="1"/>
</dbReference>
<dbReference type="CDD" id="cd00284">
    <property type="entry name" value="Cytochrome_b_N"/>
    <property type="match status" value="1"/>
</dbReference>
<dbReference type="FunFam" id="1.20.810.10:FF:000002">
    <property type="entry name" value="Cytochrome b"/>
    <property type="match status" value="1"/>
</dbReference>
<dbReference type="Gene3D" id="1.20.810.10">
    <property type="entry name" value="Cytochrome Bc1 Complex, Chain C"/>
    <property type="match status" value="1"/>
</dbReference>
<dbReference type="InterPro" id="IPR005798">
    <property type="entry name" value="Cyt_b/b6_C"/>
</dbReference>
<dbReference type="InterPro" id="IPR036150">
    <property type="entry name" value="Cyt_b/b6_C_sf"/>
</dbReference>
<dbReference type="InterPro" id="IPR005797">
    <property type="entry name" value="Cyt_b/b6_N"/>
</dbReference>
<dbReference type="InterPro" id="IPR027387">
    <property type="entry name" value="Cytb/b6-like_sf"/>
</dbReference>
<dbReference type="InterPro" id="IPR030689">
    <property type="entry name" value="Cytochrome_b"/>
</dbReference>
<dbReference type="InterPro" id="IPR048260">
    <property type="entry name" value="Cytochrome_b_C_euk/bac"/>
</dbReference>
<dbReference type="InterPro" id="IPR048259">
    <property type="entry name" value="Cytochrome_b_N_euk/bac"/>
</dbReference>
<dbReference type="InterPro" id="IPR016174">
    <property type="entry name" value="Di-haem_cyt_TM"/>
</dbReference>
<dbReference type="PANTHER" id="PTHR19271">
    <property type="entry name" value="CYTOCHROME B"/>
    <property type="match status" value="1"/>
</dbReference>
<dbReference type="PANTHER" id="PTHR19271:SF16">
    <property type="entry name" value="CYTOCHROME B"/>
    <property type="match status" value="1"/>
</dbReference>
<dbReference type="Pfam" id="PF00032">
    <property type="entry name" value="Cytochrom_B_C"/>
    <property type="match status" value="1"/>
</dbReference>
<dbReference type="Pfam" id="PF00033">
    <property type="entry name" value="Cytochrome_B"/>
    <property type="match status" value="1"/>
</dbReference>
<dbReference type="PIRSF" id="PIRSF038885">
    <property type="entry name" value="COB"/>
    <property type="match status" value="1"/>
</dbReference>
<dbReference type="SUPFAM" id="SSF81648">
    <property type="entry name" value="a domain/subunit of cytochrome bc1 complex (Ubiquinol-cytochrome c reductase)"/>
    <property type="match status" value="1"/>
</dbReference>
<dbReference type="SUPFAM" id="SSF81342">
    <property type="entry name" value="Transmembrane di-heme cytochromes"/>
    <property type="match status" value="1"/>
</dbReference>
<dbReference type="PROSITE" id="PS51003">
    <property type="entry name" value="CYTB_CTER"/>
    <property type="match status" value="1"/>
</dbReference>
<dbReference type="PROSITE" id="PS51002">
    <property type="entry name" value="CYTB_NTER"/>
    <property type="match status" value="1"/>
</dbReference>